<sequence>MARPGLTIALLLTTPNLVDACQQWLPDTRYHSIVLSGPHQGQEQLDLVSTLEAQQEEIDAVVVEQQLLDASSRDQLLGRGLLFPAVVVGEMKGHVDYHAEELHLAEDQLAQLGYTVDAAISRFLRQGRADGRSDDDGLASVDKLSRRLQERLGYLGVFYKRDPSRFLGSLPTEERRELLESLQRTYRDLLISYFSDPAASNQALESFVNTAFFSDLPITRTVDIHVDQIDEFWKQLRLEGNKSEFLQDYRLALLDVMAHLCEMYRRSIPPDIPLSGLASGRHRREADLPDAPEVSS</sequence>
<gene>
    <name evidence="5" type="primary">kaiA</name>
    <name type="ordered locus">SYNW0548</name>
</gene>
<evidence type="ECO:0000250" key="1">
    <source>
        <dbReference type="UniProtKB" id="Q79PF6"/>
    </source>
</evidence>
<evidence type="ECO:0000250" key="2">
    <source>
        <dbReference type="UniProtKB" id="Q79V62"/>
    </source>
</evidence>
<evidence type="ECO:0000255" key="3">
    <source>
        <dbReference type="PROSITE-ProRule" id="PRU00760"/>
    </source>
</evidence>
<evidence type="ECO:0000255" key="4">
    <source>
        <dbReference type="PROSITE-ProRule" id="PRU00761"/>
    </source>
</evidence>
<evidence type="ECO:0000303" key="5">
    <source>
    </source>
</evidence>
<dbReference type="EMBL" id="BX569690">
    <property type="protein sequence ID" value="CAE07063.1"/>
    <property type="molecule type" value="Genomic_DNA"/>
</dbReference>
<dbReference type="RefSeq" id="WP_011127417.1">
    <property type="nucleotide sequence ID" value="NC_005070.1"/>
</dbReference>
<dbReference type="SMR" id="Q7U8R5"/>
<dbReference type="STRING" id="84588.SYNW0548"/>
<dbReference type="KEGG" id="syw:SYNW0548"/>
<dbReference type="eggNOG" id="ENOG502Z8HQ">
    <property type="taxonomic scope" value="Bacteria"/>
</dbReference>
<dbReference type="HOGENOM" id="CLU_911234_0_0_3"/>
<dbReference type="Proteomes" id="UP000001422">
    <property type="component" value="Chromosome"/>
</dbReference>
<dbReference type="GO" id="GO:0007623">
    <property type="term" value="P:circadian rhythm"/>
    <property type="evidence" value="ECO:0007669"/>
    <property type="project" value="InterPro"/>
</dbReference>
<dbReference type="Gene3D" id="3.40.50.2300">
    <property type="match status" value="1"/>
</dbReference>
<dbReference type="Gene3D" id="1.10.1240.30">
    <property type="entry name" value="KaiA/RbsU domain"/>
    <property type="match status" value="1"/>
</dbReference>
<dbReference type="InterPro" id="IPR011006">
    <property type="entry name" value="CheY-like_superfamily"/>
</dbReference>
<dbReference type="InterPro" id="IPR011648">
    <property type="entry name" value="Circadian_clock_KaiA"/>
</dbReference>
<dbReference type="InterPro" id="IPR020844">
    <property type="entry name" value="Circadian_clock_KaiA_N"/>
</dbReference>
<dbReference type="InterPro" id="IPR020856">
    <property type="entry name" value="Circadian_clock_protein_KaiA_C"/>
</dbReference>
<dbReference type="InterPro" id="IPR017944">
    <property type="entry name" value="KaiA/RbsU_helical_domain_sf"/>
</dbReference>
<dbReference type="Pfam" id="PF07688">
    <property type="entry name" value="KaiA"/>
    <property type="match status" value="1"/>
</dbReference>
<dbReference type="Pfam" id="PF21714">
    <property type="entry name" value="KaiA_N"/>
    <property type="match status" value="1"/>
</dbReference>
<dbReference type="SMART" id="SM01247">
    <property type="entry name" value="KaiA"/>
    <property type="match status" value="1"/>
</dbReference>
<dbReference type="SUPFAM" id="SSF52172">
    <property type="entry name" value="CheY-like"/>
    <property type="match status" value="1"/>
</dbReference>
<dbReference type="SUPFAM" id="SSF101215">
    <property type="entry name" value="KaiA/RbsU domain"/>
    <property type="match status" value="1"/>
</dbReference>
<dbReference type="PROSITE" id="PS51431">
    <property type="entry name" value="KAIA_C"/>
    <property type="match status" value="1"/>
</dbReference>
<dbReference type="PROSITE" id="PS51430">
    <property type="entry name" value="KAIA_N"/>
    <property type="match status" value="1"/>
</dbReference>
<keyword id="KW-0090">Biological rhythms</keyword>
<organism>
    <name type="scientific">Parasynechococcus marenigrum (strain WH8102)</name>
    <dbReference type="NCBI Taxonomy" id="84588"/>
    <lineage>
        <taxon>Bacteria</taxon>
        <taxon>Bacillati</taxon>
        <taxon>Cyanobacteriota</taxon>
        <taxon>Cyanophyceae</taxon>
        <taxon>Synechococcales</taxon>
        <taxon>Prochlorococcaceae</taxon>
        <taxon>Parasynechococcus</taxon>
        <taxon>Parasynechococcus marenigrum</taxon>
    </lineage>
</organism>
<reference key="1">
    <citation type="journal article" date="2003" name="Nature">
        <title>The genome of a motile marine Synechococcus.</title>
        <authorList>
            <person name="Palenik B."/>
            <person name="Brahamsha B."/>
            <person name="Larimer F.W."/>
            <person name="Land M.L."/>
            <person name="Hauser L."/>
            <person name="Chain P."/>
            <person name="Lamerdin J.E."/>
            <person name="Regala W."/>
            <person name="Allen E.E."/>
            <person name="McCarren J."/>
            <person name="Paulsen I.T."/>
            <person name="Dufresne A."/>
            <person name="Partensky F."/>
            <person name="Webb E.A."/>
            <person name="Waterbury J."/>
        </authorList>
    </citation>
    <scope>NUCLEOTIDE SEQUENCE [LARGE SCALE GENOMIC DNA]</scope>
    <source>
        <strain>WH8102</strain>
    </source>
</reference>
<accession>Q7U8R5</accession>
<comment type="function">
    <text evidence="1">Key component of the KaiABC oscillator complex, which constitutes the main circadian regulator in cyanobacteria. Complex composition changes during the circadian cycle to control KaiC phosphorylation. KaiA stimulates KaiC autophosphorylation, while KaiB sequesters KaiA, leading to KaiC autodephosphorylation. KaiA binding to the KaiC CII domain during the subjective day yields KaiA(2-4):KaiC(6) complexes which stimulate KaiC autophosphorylation. Phospho-Ser-431 KaiC accumulation triggers binding of KaiB during the subjective night to form the KaiB(6):KaiC(6) complex, leading to changes in the output regulators CikA and SasA. KaiB(6):KaiC(6) formation exposes a site for KaiA binding on KaiB that sequesters KaiA from KaiC's CII domain, making the KaiC(6):KaiB(6):KaiA(12) complex resulting in KaiC autodephosphorylation. Complete dephosphorylation of KaiC leads to dissociation of KaiA(2):KaiB(1), completing 1 cycle of the Kai oscillator.</text>
</comment>
<comment type="function">
    <text evidence="1">Binds oxidized quinones via the N-terminal PsR domain, allowing it to sense redox changes and possibly mediate clock input.</text>
</comment>
<comment type="subunit">
    <text evidence="1">Homodimer. The KaiABC complex composition changes during the circadian cycle to control KaiC phosphorylation. Complexes KaiC(6), KaiA(2-4):KaiC(6), KaiB(6):KaiC(6) and KaiC(6):KaiB(6):KaiA(12) are among the most important forms, many form cooperatively. KaiA and CikA bind to the same region of the KaiB(fs) form and therefore compete.</text>
</comment>
<comment type="domain">
    <text evidence="1 2">The N-terminal pseudoreceiver domain (PsR, approximately equal to KaiA N-terminal) binds oxidized quinones (By similarity). The KaiA C-terminal domain mediates interaction with KaiC, homodimerization, and is responsible for the clock oscillation function (By similarity).</text>
</comment>
<feature type="chain" id="PRO_0000217872" description="Circadian clock oscillator protein KaiA">
    <location>
        <begin position="1"/>
        <end position="296"/>
    </location>
</feature>
<feature type="domain" description="KaiA N-terminal" evidence="3">
    <location>
        <begin position="2"/>
        <end position="152"/>
    </location>
</feature>
<feature type="domain" description="KaiA C-terminal" evidence="4">
    <location>
        <begin position="162"/>
        <end position="270"/>
    </location>
</feature>
<feature type="region of interest" description="PsR domain, binds oxidized quinones" evidence="1">
    <location>
        <begin position="2"/>
        <end position="133"/>
    </location>
</feature>
<feature type="region of interest" description="Flexible linker" evidence="1">
    <location>
        <begin position="153"/>
        <end position="161"/>
    </location>
</feature>
<name>KAIA_PARMW</name>
<proteinExistence type="inferred from homology"/>
<protein>
    <recommendedName>
        <fullName evidence="5">Circadian clock oscillator protein KaiA</fullName>
    </recommendedName>
</protein>